<accession>Q21CS1</accession>
<dbReference type="EC" id="1.1.1.85" evidence="1"/>
<dbReference type="EMBL" id="CP000301">
    <property type="protein sequence ID" value="ABD85815.1"/>
    <property type="status" value="ALT_INIT"/>
    <property type="molecule type" value="Genomic_DNA"/>
</dbReference>
<dbReference type="SMR" id="Q21CS1"/>
<dbReference type="STRING" id="316056.RPC_0240"/>
<dbReference type="KEGG" id="rpc:RPC_0240"/>
<dbReference type="eggNOG" id="COG0473">
    <property type="taxonomic scope" value="Bacteria"/>
</dbReference>
<dbReference type="HOGENOM" id="CLU_031953_0_3_5"/>
<dbReference type="OrthoDB" id="9767905at2"/>
<dbReference type="UniPathway" id="UPA00048">
    <property type="reaction ID" value="UER00072"/>
</dbReference>
<dbReference type="GO" id="GO:0005829">
    <property type="term" value="C:cytosol"/>
    <property type="evidence" value="ECO:0007669"/>
    <property type="project" value="TreeGrafter"/>
</dbReference>
<dbReference type="GO" id="GO:0003862">
    <property type="term" value="F:3-isopropylmalate dehydrogenase activity"/>
    <property type="evidence" value="ECO:0007669"/>
    <property type="project" value="UniProtKB-UniRule"/>
</dbReference>
<dbReference type="GO" id="GO:0000287">
    <property type="term" value="F:magnesium ion binding"/>
    <property type="evidence" value="ECO:0007669"/>
    <property type="project" value="InterPro"/>
</dbReference>
<dbReference type="GO" id="GO:0051287">
    <property type="term" value="F:NAD binding"/>
    <property type="evidence" value="ECO:0007669"/>
    <property type="project" value="InterPro"/>
</dbReference>
<dbReference type="GO" id="GO:0009098">
    <property type="term" value="P:L-leucine biosynthetic process"/>
    <property type="evidence" value="ECO:0007669"/>
    <property type="project" value="UniProtKB-UniRule"/>
</dbReference>
<dbReference type="FunFam" id="3.40.718.10:FF:000006">
    <property type="entry name" value="3-isopropylmalate dehydrogenase"/>
    <property type="match status" value="1"/>
</dbReference>
<dbReference type="Gene3D" id="3.40.718.10">
    <property type="entry name" value="Isopropylmalate Dehydrogenase"/>
    <property type="match status" value="1"/>
</dbReference>
<dbReference type="HAMAP" id="MF_01033">
    <property type="entry name" value="LeuB_type1"/>
    <property type="match status" value="1"/>
</dbReference>
<dbReference type="InterPro" id="IPR019818">
    <property type="entry name" value="IsoCit/isopropylmalate_DH_CS"/>
</dbReference>
<dbReference type="InterPro" id="IPR024084">
    <property type="entry name" value="IsoPropMal-DH-like_dom"/>
</dbReference>
<dbReference type="InterPro" id="IPR004429">
    <property type="entry name" value="Isopropylmalate_DH"/>
</dbReference>
<dbReference type="NCBIfam" id="TIGR00169">
    <property type="entry name" value="leuB"/>
    <property type="match status" value="1"/>
</dbReference>
<dbReference type="PANTHER" id="PTHR42979">
    <property type="entry name" value="3-ISOPROPYLMALATE DEHYDROGENASE"/>
    <property type="match status" value="1"/>
</dbReference>
<dbReference type="PANTHER" id="PTHR42979:SF1">
    <property type="entry name" value="3-ISOPROPYLMALATE DEHYDROGENASE"/>
    <property type="match status" value="1"/>
</dbReference>
<dbReference type="Pfam" id="PF00180">
    <property type="entry name" value="Iso_dh"/>
    <property type="match status" value="1"/>
</dbReference>
<dbReference type="SMART" id="SM01329">
    <property type="entry name" value="Iso_dh"/>
    <property type="match status" value="1"/>
</dbReference>
<dbReference type="SUPFAM" id="SSF53659">
    <property type="entry name" value="Isocitrate/Isopropylmalate dehydrogenase-like"/>
    <property type="match status" value="1"/>
</dbReference>
<dbReference type="PROSITE" id="PS00470">
    <property type="entry name" value="IDH_IMDH"/>
    <property type="match status" value="1"/>
</dbReference>
<feature type="chain" id="PRO_0000250133" description="3-isopropylmalate dehydrogenase">
    <location>
        <begin position="1"/>
        <end position="370"/>
    </location>
</feature>
<feature type="binding site" evidence="1">
    <location>
        <begin position="77"/>
        <end position="90"/>
    </location>
    <ligand>
        <name>NAD(+)</name>
        <dbReference type="ChEBI" id="CHEBI:57540"/>
    </ligand>
</feature>
<feature type="binding site" evidence="1">
    <location>
        <position position="97"/>
    </location>
    <ligand>
        <name>substrate</name>
    </ligand>
</feature>
<feature type="binding site" evidence="1">
    <location>
        <position position="107"/>
    </location>
    <ligand>
        <name>substrate</name>
    </ligand>
</feature>
<feature type="binding site" evidence="1">
    <location>
        <position position="135"/>
    </location>
    <ligand>
        <name>substrate</name>
    </ligand>
</feature>
<feature type="binding site" evidence="1">
    <location>
        <position position="226"/>
    </location>
    <ligand>
        <name>Mg(2+)</name>
        <dbReference type="ChEBI" id="CHEBI:18420"/>
    </ligand>
</feature>
<feature type="binding site" evidence="1">
    <location>
        <position position="226"/>
    </location>
    <ligand>
        <name>substrate</name>
    </ligand>
</feature>
<feature type="binding site" evidence="1">
    <location>
        <position position="250"/>
    </location>
    <ligand>
        <name>Mg(2+)</name>
        <dbReference type="ChEBI" id="CHEBI:18420"/>
    </ligand>
</feature>
<feature type="binding site" evidence="1">
    <location>
        <position position="254"/>
    </location>
    <ligand>
        <name>Mg(2+)</name>
        <dbReference type="ChEBI" id="CHEBI:18420"/>
    </ligand>
</feature>
<feature type="binding site" evidence="1">
    <location>
        <begin position="290"/>
        <end position="302"/>
    </location>
    <ligand>
        <name>NAD(+)</name>
        <dbReference type="ChEBI" id="CHEBI:57540"/>
    </ligand>
</feature>
<feature type="site" description="Important for catalysis" evidence="1">
    <location>
        <position position="142"/>
    </location>
</feature>
<feature type="site" description="Important for catalysis" evidence="1">
    <location>
        <position position="193"/>
    </location>
</feature>
<proteinExistence type="inferred from homology"/>
<organism>
    <name type="scientific">Rhodopseudomonas palustris (strain BisB18)</name>
    <dbReference type="NCBI Taxonomy" id="316056"/>
    <lineage>
        <taxon>Bacteria</taxon>
        <taxon>Pseudomonadati</taxon>
        <taxon>Pseudomonadota</taxon>
        <taxon>Alphaproteobacteria</taxon>
        <taxon>Hyphomicrobiales</taxon>
        <taxon>Nitrobacteraceae</taxon>
        <taxon>Rhodopseudomonas</taxon>
    </lineage>
</organism>
<gene>
    <name evidence="1" type="primary">leuB</name>
    <name type="ordered locus">RPC_0240</name>
</gene>
<name>LEU3_RHOPB</name>
<protein>
    <recommendedName>
        <fullName evidence="1">3-isopropylmalate dehydrogenase</fullName>
        <ecNumber evidence="1">1.1.1.85</ecNumber>
    </recommendedName>
    <alternativeName>
        <fullName evidence="1">3-IPM-DH</fullName>
    </alternativeName>
    <alternativeName>
        <fullName evidence="1">Beta-IPM dehydrogenase</fullName>
        <shortName evidence="1">IMDH</shortName>
    </alternativeName>
</protein>
<evidence type="ECO:0000255" key="1">
    <source>
        <dbReference type="HAMAP-Rule" id="MF_01033"/>
    </source>
</evidence>
<evidence type="ECO:0000305" key="2"/>
<sequence>MATHKLLLLPGDGIGTEVMAEVKRLIDWLNAQGIAHFETEDGLVGGAAYDADKVAITDATMAKAQASDAVIFGAVGGAKWDGVPYEARPEAGLLRLRKDLGLFANLRPAVCYPALADSSSLKREVVEGLDIMIVRELTGGVYFGEPKTITDLGNGQKRAIDTQVYDSYEIDRIARVAFDLARKRRNKVTSMEKRNVMKSGVLWNEVVTRVHAEDYKDVQLEHQLADSGGMNLVKWPKQFDVIVTDNLFGDILSDIAAMLTGSLGMLPSASLGAVDANTGKRKSMYEPVHGSAPDIAGKGLANPVAMLASFGMALRYSLDMGELADKLDAAIAAVLAKGLRTADIKSEGSTVISTSQMGEAILKEMQALHA</sequence>
<reference key="1">
    <citation type="submission" date="2006-03" db="EMBL/GenBank/DDBJ databases">
        <title>Complete sequence of Rhodopseudomonas palustris BisB18.</title>
        <authorList>
            <consortium name="US DOE Joint Genome Institute"/>
            <person name="Copeland A."/>
            <person name="Lucas S."/>
            <person name="Lapidus A."/>
            <person name="Barry K."/>
            <person name="Detter J.C."/>
            <person name="Glavina del Rio T."/>
            <person name="Hammon N."/>
            <person name="Israni S."/>
            <person name="Dalin E."/>
            <person name="Tice H."/>
            <person name="Pitluck S."/>
            <person name="Chain P."/>
            <person name="Malfatti S."/>
            <person name="Shin M."/>
            <person name="Vergez L."/>
            <person name="Schmutz J."/>
            <person name="Larimer F."/>
            <person name="Land M."/>
            <person name="Hauser L."/>
            <person name="Pelletier D.A."/>
            <person name="Kyrpides N."/>
            <person name="Anderson I."/>
            <person name="Oda Y."/>
            <person name="Harwood C.S."/>
            <person name="Richardson P."/>
        </authorList>
    </citation>
    <scope>NUCLEOTIDE SEQUENCE [LARGE SCALE GENOMIC DNA]</scope>
    <source>
        <strain>BisB18</strain>
    </source>
</reference>
<comment type="function">
    <text evidence="1">Catalyzes the oxidation of 3-carboxy-2-hydroxy-4-methylpentanoate (3-isopropylmalate) to 3-carboxy-4-methyl-2-oxopentanoate. The product decarboxylates to 4-methyl-2 oxopentanoate.</text>
</comment>
<comment type="catalytic activity">
    <reaction evidence="1">
        <text>(2R,3S)-3-isopropylmalate + NAD(+) = 4-methyl-2-oxopentanoate + CO2 + NADH</text>
        <dbReference type="Rhea" id="RHEA:32271"/>
        <dbReference type="ChEBI" id="CHEBI:16526"/>
        <dbReference type="ChEBI" id="CHEBI:17865"/>
        <dbReference type="ChEBI" id="CHEBI:35121"/>
        <dbReference type="ChEBI" id="CHEBI:57540"/>
        <dbReference type="ChEBI" id="CHEBI:57945"/>
        <dbReference type="EC" id="1.1.1.85"/>
    </reaction>
</comment>
<comment type="cofactor">
    <cofactor evidence="1">
        <name>Mg(2+)</name>
        <dbReference type="ChEBI" id="CHEBI:18420"/>
    </cofactor>
    <cofactor evidence="1">
        <name>Mn(2+)</name>
        <dbReference type="ChEBI" id="CHEBI:29035"/>
    </cofactor>
    <text evidence="1">Binds 1 Mg(2+) or Mn(2+) ion per subunit.</text>
</comment>
<comment type="pathway">
    <text evidence="1">Amino-acid biosynthesis; L-leucine biosynthesis; L-leucine from 3-methyl-2-oxobutanoate: step 3/4.</text>
</comment>
<comment type="subunit">
    <text evidence="1">Homodimer.</text>
</comment>
<comment type="subcellular location">
    <subcellularLocation>
        <location evidence="1">Cytoplasm</location>
    </subcellularLocation>
</comment>
<comment type="similarity">
    <text evidence="1">Belongs to the isocitrate and isopropylmalate dehydrogenases family. LeuB type 1 subfamily.</text>
</comment>
<comment type="sequence caution" evidence="2">
    <conflict type="erroneous initiation">
        <sequence resource="EMBL-CDS" id="ABD85815"/>
    </conflict>
</comment>
<keyword id="KW-0028">Amino-acid biosynthesis</keyword>
<keyword id="KW-0100">Branched-chain amino acid biosynthesis</keyword>
<keyword id="KW-0963">Cytoplasm</keyword>
<keyword id="KW-0432">Leucine biosynthesis</keyword>
<keyword id="KW-0460">Magnesium</keyword>
<keyword id="KW-0464">Manganese</keyword>
<keyword id="KW-0479">Metal-binding</keyword>
<keyword id="KW-0520">NAD</keyword>
<keyword id="KW-0560">Oxidoreductase</keyword>